<keyword id="KW-0413">Isomerase</keyword>
<keyword id="KW-0460">Magnesium</keyword>
<keyword id="KW-0479">Metal-binding</keyword>
<keyword id="KW-0597">Phosphoprotein</keyword>
<keyword id="KW-1185">Reference proteome</keyword>
<comment type="function">
    <text evidence="1">Catalyzes the conversion of glucosamine-6-phosphate to glucosamine-1-phosphate.</text>
</comment>
<comment type="catalytic activity">
    <reaction evidence="1">
        <text>alpha-D-glucosamine 1-phosphate = D-glucosamine 6-phosphate</text>
        <dbReference type="Rhea" id="RHEA:23424"/>
        <dbReference type="ChEBI" id="CHEBI:58516"/>
        <dbReference type="ChEBI" id="CHEBI:58725"/>
        <dbReference type="EC" id="5.4.2.10"/>
    </reaction>
</comment>
<comment type="cofactor">
    <cofactor evidence="1">
        <name>Mg(2+)</name>
        <dbReference type="ChEBI" id="CHEBI:18420"/>
    </cofactor>
    <text evidence="1">Binds 1 Mg(2+) ion per subunit.</text>
</comment>
<comment type="PTM">
    <text evidence="1">Activated by phosphorylation.</text>
</comment>
<comment type="similarity">
    <text evidence="1">Belongs to the phosphohexose mutase family.</text>
</comment>
<name>GLMM_KORVE</name>
<feature type="chain" id="PRO_0000305629" description="Phosphoglucosamine mutase">
    <location>
        <begin position="1"/>
        <end position="463"/>
    </location>
</feature>
<feature type="active site" description="Phosphoserine intermediate" evidence="1">
    <location>
        <position position="110"/>
    </location>
</feature>
<feature type="binding site" description="via phosphate group" evidence="1">
    <location>
        <position position="110"/>
    </location>
    <ligand>
        <name>Mg(2+)</name>
        <dbReference type="ChEBI" id="CHEBI:18420"/>
    </ligand>
</feature>
<feature type="binding site" evidence="1">
    <location>
        <position position="255"/>
    </location>
    <ligand>
        <name>Mg(2+)</name>
        <dbReference type="ChEBI" id="CHEBI:18420"/>
    </ligand>
</feature>
<feature type="binding site" evidence="1">
    <location>
        <position position="257"/>
    </location>
    <ligand>
        <name>Mg(2+)</name>
        <dbReference type="ChEBI" id="CHEBI:18420"/>
    </ligand>
</feature>
<feature type="binding site" evidence="1">
    <location>
        <position position="259"/>
    </location>
    <ligand>
        <name>Mg(2+)</name>
        <dbReference type="ChEBI" id="CHEBI:18420"/>
    </ligand>
</feature>
<feature type="modified residue" description="Phosphoserine" evidence="1">
    <location>
        <position position="110"/>
    </location>
</feature>
<evidence type="ECO:0000255" key="1">
    <source>
        <dbReference type="HAMAP-Rule" id="MF_01554"/>
    </source>
</evidence>
<accession>Q1IV19</accession>
<protein>
    <recommendedName>
        <fullName evidence="1">Phosphoglucosamine mutase</fullName>
        <ecNumber evidence="1">5.4.2.10</ecNumber>
    </recommendedName>
</protein>
<reference key="1">
    <citation type="journal article" date="2009" name="Appl. Environ. Microbiol.">
        <title>Three genomes from the phylum Acidobacteria provide insight into the lifestyles of these microorganisms in soils.</title>
        <authorList>
            <person name="Ward N.L."/>
            <person name="Challacombe J.F."/>
            <person name="Janssen P.H."/>
            <person name="Henrissat B."/>
            <person name="Coutinho P.M."/>
            <person name="Wu M."/>
            <person name="Xie G."/>
            <person name="Haft D.H."/>
            <person name="Sait M."/>
            <person name="Badger J."/>
            <person name="Barabote R.D."/>
            <person name="Bradley B."/>
            <person name="Brettin T.S."/>
            <person name="Brinkac L.M."/>
            <person name="Bruce D."/>
            <person name="Creasy T."/>
            <person name="Daugherty S.C."/>
            <person name="Davidsen T.M."/>
            <person name="DeBoy R.T."/>
            <person name="Detter J.C."/>
            <person name="Dodson R.J."/>
            <person name="Durkin A.S."/>
            <person name="Ganapathy A."/>
            <person name="Gwinn-Giglio M."/>
            <person name="Han C.S."/>
            <person name="Khouri H."/>
            <person name="Kiss H."/>
            <person name="Kothari S.P."/>
            <person name="Madupu R."/>
            <person name="Nelson K.E."/>
            <person name="Nelson W.C."/>
            <person name="Paulsen I."/>
            <person name="Penn K."/>
            <person name="Ren Q."/>
            <person name="Rosovitz M.J."/>
            <person name="Selengut J.D."/>
            <person name="Shrivastava S."/>
            <person name="Sullivan S.A."/>
            <person name="Tapia R."/>
            <person name="Thompson L.S."/>
            <person name="Watkins K.L."/>
            <person name="Yang Q."/>
            <person name="Yu C."/>
            <person name="Zafar N."/>
            <person name="Zhou L."/>
            <person name="Kuske C.R."/>
        </authorList>
    </citation>
    <scope>NUCLEOTIDE SEQUENCE [LARGE SCALE GENOMIC DNA]</scope>
    <source>
        <strain>Ellin345</strain>
    </source>
</reference>
<organism>
    <name type="scientific">Koribacter versatilis (strain Ellin345)</name>
    <dbReference type="NCBI Taxonomy" id="204669"/>
    <lineage>
        <taxon>Bacteria</taxon>
        <taxon>Pseudomonadati</taxon>
        <taxon>Acidobacteriota</taxon>
        <taxon>Terriglobia</taxon>
        <taxon>Terriglobales</taxon>
        <taxon>Candidatus Korobacteraceae</taxon>
        <taxon>Candidatus Korobacter</taxon>
    </lineage>
</organism>
<proteinExistence type="inferred from homology"/>
<sequence length="463" mass="49676">MSLPTMDKPVRQLFGTDGIRGVAGEYPLDPHTVFAIGRALGARLVEKYQTARVLIGQDTRESSDWISRALARGLESANCGVASAGVITTPGVAYLTRTHGFSAGIVVSASHNPWTDNGIKVFGANGYKLSDDIEHEIEAQIFYHLEELERAESEGEGPAMLPGDDKLREDYAEWLRSQVEGTDFSKFRVLLDCANGAASSIAHLVFPKVGVFSEFTHICPTGRNINANCGALHPEEAAKHVGQSRGRFDLGITFDGDADRALFSDGDGNIVNGDAVLLLAARDMKARGHLKEDTVVATTMSNMGLEAALKRSGIRMLRAAVGDKYVLEEMKKTGATLGGEQSGHILFMDSDATTGDGILTALRVLEVLARSGKSLAELIADLKVFPQVIRNVKVNAKIPMKELPAVMSAIEAAEQDLGDSGRVVVRYSGTEKLARVMIEAESEAKMNQHATAIAEAIQEAIGI</sequence>
<dbReference type="EC" id="5.4.2.10" evidence="1"/>
<dbReference type="EMBL" id="CP000360">
    <property type="protein sequence ID" value="ABF39281.1"/>
    <property type="molecule type" value="Genomic_DNA"/>
</dbReference>
<dbReference type="RefSeq" id="WP_011521083.1">
    <property type="nucleotide sequence ID" value="NC_008009.1"/>
</dbReference>
<dbReference type="SMR" id="Q1IV19"/>
<dbReference type="STRING" id="204669.Acid345_0276"/>
<dbReference type="EnsemblBacteria" id="ABF39281">
    <property type="protein sequence ID" value="ABF39281"/>
    <property type="gene ID" value="Acid345_0276"/>
</dbReference>
<dbReference type="KEGG" id="aba:Acid345_0276"/>
<dbReference type="eggNOG" id="COG1109">
    <property type="taxonomic scope" value="Bacteria"/>
</dbReference>
<dbReference type="HOGENOM" id="CLU_016950_7_0_0"/>
<dbReference type="OrthoDB" id="9806956at2"/>
<dbReference type="Proteomes" id="UP000002432">
    <property type="component" value="Chromosome"/>
</dbReference>
<dbReference type="GO" id="GO:0005829">
    <property type="term" value="C:cytosol"/>
    <property type="evidence" value="ECO:0007669"/>
    <property type="project" value="TreeGrafter"/>
</dbReference>
<dbReference type="GO" id="GO:0000287">
    <property type="term" value="F:magnesium ion binding"/>
    <property type="evidence" value="ECO:0007669"/>
    <property type="project" value="UniProtKB-UniRule"/>
</dbReference>
<dbReference type="GO" id="GO:0008966">
    <property type="term" value="F:phosphoglucosamine mutase activity"/>
    <property type="evidence" value="ECO:0007669"/>
    <property type="project" value="UniProtKB-UniRule"/>
</dbReference>
<dbReference type="GO" id="GO:0004615">
    <property type="term" value="F:phosphomannomutase activity"/>
    <property type="evidence" value="ECO:0007669"/>
    <property type="project" value="TreeGrafter"/>
</dbReference>
<dbReference type="GO" id="GO:0005975">
    <property type="term" value="P:carbohydrate metabolic process"/>
    <property type="evidence" value="ECO:0007669"/>
    <property type="project" value="InterPro"/>
</dbReference>
<dbReference type="GO" id="GO:0009252">
    <property type="term" value="P:peptidoglycan biosynthetic process"/>
    <property type="evidence" value="ECO:0007669"/>
    <property type="project" value="TreeGrafter"/>
</dbReference>
<dbReference type="GO" id="GO:0006048">
    <property type="term" value="P:UDP-N-acetylglucosamine biosynthetic process"/>
    <property type="evidence" value="ECO:0007669"/>
    <property type="project" value="TreeGrafter"/>
</dbReference>
<dbReference type="CDD" id="cd05802">
    <property type="entry name" value="GlmM"/>
    <property type="match status" value="1"/>
</dbReference>
<dbReference type="FunFam" id="3.30.310.50:FF:000001">
    <property type="entry name" value="Phosphoglucosamine mutase"/>
    <property type="match status" value="1"/>
</dbReference>
<dbReference type="FunFam" id="3.40.120.10:FF:000001">
    <property type="entry name" value="Phosphoglucosamine mutase"/>
    <property type="match status" value="1"/>
</dbReference>
<dbReference type="FunFam" id="3.40.120.10:FF:000002">
    <property type="entry name" value="Phosphoglucosamine mutase"/>
    <property type="match status" value="1"/>
</dbReference>
<dbReference type="Gene3D" id="3.40.120.10">
    <property type="entry name" value="Alpha-D-Glucose-1,6-Bisphosphate, subunit A, domain 3"/>
    <property type="match status" value="3"/>
</dbReference>
<dbReference type="Gene3D" id="3.30.310.50">
    <property type="entry name" value="Alpha-D-phosphohexomutase, C-terminal domain"/>
    <property type="match status" value="1"/>
</dbReference>
<dbReference type="HAMAP" id="MF_01554_B">
    <property type="entry name" value="GlmM_B"/>
    <property type="match status" value="1"/>
</dbReference>
<dbReference type="InterPro" id="IPR005844">
    <property type="entry name" value="A-D-PHexomutase_a/b/a-I"/>
</dbReference>
<dbReference type="InterPro" id="IPR016055">
    <property type="entry name" value="A-D-PHexomutase_a/b/a-I/II/III"/>
</dbReference>
<dbReference type="InterPro" id="IPR005845">
    <property type="entry name" value="A-D-PHexomutase_a/b/a-II"/>
</dbReference>
<dbReference type="InterPro" id="IPR005846">
    <property type="entry name" value="A-D-PHexomutase_a/b/a-III"/>
</dbReference>
<dbReference type="InterPro" id="IPR005843">
    <property type="entry name" value="A-D-PHexomutase_C"/>
</dbReference>
<dbReference type="InterPro" id="IPR036900">
    <property type="entry name" value="A-D-PHexomutase_C_sf"/>
</dbReference>
<dbReference type="InterPro" id="IPR016066">
    <property type="entry name" value="A-D-PHexomutase_CS"/>
</dbReference>
<dbReference type="InterPro" id="IPR005841">
    <property type="entry name" value="Alpha-D-phosphohexomutase_SF"/>
</dbReference>
<dbReference type="InterPro" id="IPR006352">
    <property type="entry name" value="GlmM_bact"/>
</dbReference>
<dbReference type="InterPro" id="IPR050060">
    <property type="entry name" value="Phosphoglucosamine_mutase"/>
</dbReference>
<dbReference type="NCBIfam" id="TIGR01455">
    <property type="entry name" value="glmM"/>
    <property type="match status" value="1"/>
</dbReference>
<dbReference type="PANTHER" id="PTHR42946:SF1">
    <property type="entry name" value="PHOSPHOGLUCOMUTASE (ALPHA-D-GLUCOSE-1,6-BISPHOSPHATE-DEPENDENT)"/>
    <property type="match status" value="1"/>
</dbReference>
<dbReference type="PANTHER" id="PTHR42946">
    <property type="entry name" value="PHOSPHOHEXOSE MUTASE"/>
    <property type="match status" value="1"/>
</dbReference>
<dbReference type="Pfam" id="PF02878">
    <property type="entry name" value="PGM_PMM_I"/>
    <property type="match status" value="1"/>
</dbReference>
<dbReference type="Pfam" id="PF02879">
    <property type="entry name" value="PGM_PMM_II"/>
    <property type="match status" value="1"/>
</dbReference>
<dbReference type="Pfam" id="PF02880">
    <property type="entry name" value="PGM_PMM_III"/>
    <property type="match status" value="1"/>
</dbReference>
<dbReference type="Pfam" id="PF00408">
    <property type="entry name" value="PGM_PMM_IV"/>
    <property type="match status" value="1"/>
</dbReference>
<dbReference type="PRINTS" id="PR00509">
    <property type="entry name" value="PGMPMM"/>
</dbReference>
<dbReference type="SUPFAM" id="SSF55957">
    <property type="entry name" value="Phosphoglucomutase, C-terminal domain"/>
    <property type="match status" value="1"/>
</dbReference>
<dbReference type="SUPFAM" id="SSF53738">
    <property type="entry name" value="Phosphoglucomutase, first 3 domains"/>
    <property type="match status" value="3"/>
</dbReference>
<dbReference type="PROSITE" id="PS00710">
    <property type="entry name" value="PGM_PMM"/>
    <property type="match status" value="1"/>
</dbReference>
<gene>
    <name evidence="1" type="primary">glmM</name>
    <name type="ordered locus">Acid345_0276</name>
</gene>